<comment type="function">
    <text evidence="1">Involved in the biosynthesis of isopentenyl diphosphate (IPP) and dimethylallyl diphosphate (DMAPP), two major building blocks of isoprenoid compounds. Catalyzes the conversion of 4-diphosphocytidyl-2-C-methyl-D-erythritol 2-phosphate (CDP-ME2P) to 2-C-methyl-D-erythritol 2,4-cyclodiphosphate (ME-CPP) with a corresponding release of cytidine 5-monophosphate (CMP).</text>
</comment>
<comment type="catalytic activity">
    <reaction evidence="1">
        <text>4-CDP-2-C-methyl-D-erythritol 2-phosphate = 2-C-methyl-D-erythritol 2,4-cyclic diphosphate + CMP</text>
        <dbReference type="Rhea" id="RHEA:23864"/>
        <dbReference type="ChEBI" id="CHEBI:57919"/>
        <dbReference type="ChEBI" id="CHEBI:58483"/>
        <dbReference type="ChEBI" id="CHEBI:60377"/>
        <dbReference type="EC" id="4.6.1.12"/>
    </reaction>
</comment>
<comment type="cofactor">
    <cofactor evidence="1">
        <name>a divalent metal cation</name>
        <dbReference type="ChEBI" id="CHEBI:60240"/>
    </cofactor>
    <text evidence="1">Binds 1 divalent metal cation per subunit.</text>
</comment>
<comment type="pathway">
    <text evidence="1">Isoprenoid biosynthesis; isopentenyl diphosphate biosynthesis via DXP pathway; isopentenyl diphosphate from 1-deoxy-D-xylulose 5-phosphate: step 4/6.</text>
</comment>
<comment type="subunit">
    <text evidence="1">Homotrimer.</text>
</comment>
<comment type="similarity">
    <text evidence="1">Belongs to the IspF family.</text>
</comment>
<feature type="chain" id="PRO_1000094281" description="2-C-methyl-D-erythritol 2,4-cyclodiphosphate synthase">
    <location>
        <begin position="1"/>
        <end position="157"/>
    </location>
</feature>
<feature type="binding site" evidence="1">
    <location>
        <begin position="8"/>
        <end position="10"/>
    </location>
    <ligand>
        <name>4-CDP-2-C-methyl-D-erythritol 2-phosphate</name>
        <dbReference type="ChEBI" id="CHEBI:57919"/>
    </ligand>
</feature>
<feature type="binding site" evidence="1">
    <location>
        <position position="8"/>
    </location>
    <ligand>
        <name>a divalent metal cation</name>
        <dbReference type="ChEBI" id="CHEBI:60240"/>
    </ligand>
</feature>
<feature type="binding site" evidence="1">
    <location>
        <position position="10"/>
    </location>
    <ligand>
        <name>a divalent metal cation</name>
        <dbReference type="ChEBI" id="CHEBI:60240"/>
    </ligand>
</feature>
<feature type="binding site" evidence="1">
    <location>
        <begin position="34"/>
        <end position="35"/>
    </location>
    <ligand>
        <name>4-CDP-2-C-methyl-D-erythritol 2-phosphate</name>
        <dbReference type="ChEBI" id="CHEBI:57919"/>
    </ligand>
</feature>
<feature type="binding site" evidence="1">
    <location>
        <position position="42"/>
    </location>
    <ligand>
        <name>a divalent metal cation</name>
        <dbReference type="ChEBI" id="CHEBI:60240"/>
    </ligand>
</feature>
<feature type="binding site" evidence="1">
    <location>
        <begin position="56"/>
        <end position="58"/>
    </location>
    <ligand>
        <name>4-CDP-2-C-methyl-D-erythritol 2-phosphate</name>
        <dbReference type="ChEBI" id="CHEBI:57919"/>
    </ligand>
</feature>
<feature type="binding site" evidence="1">
    <location>
        <begin position="61"/>
        <end position="65"/>
    </location>
    <ligand>
        <name>4-CDP-2-C-methyl-D-erythritol 2-phosphate</name>
        <dbReference type="ChEBI" id="CHEBI:57919"/>
    </ligand>
</feature>
<feature type="binding site" evidence="1">
    <location>
        <begin position="132"/>
        <end position="135"/>
    </location>
    <ligand>
        <name>4-CDP-2-C-methyl-D-erythritol 2-phosphate</name>
        <dbReference type="ChEBI" id="CHEBI:57919"/>
    </ligand>
</feature>
<feature type="binding site" evidence="1">
    <location>
        <position position="139"/>
    </location>
    <ligand>
        <name>4-CDP-2-C-methyl-D-erythritol 2-phosphate</name>
        <dbReference type="ChEBI" id="CHEBI:57919"/>
    </ligand>
</feature>
<feature type="binding site" evidence="1">
    <location>
        <position position="142"/>
    </location>
    <ligand>
        <name>4-CDP-2-C-methyl-D-erythritol 2-phosphate</name>
        <dbReference type="ChEBI" id="CHEBI:57919"/>
    </ligand>
</feature>
<feature type="site" description="Transition state stabilizer" evidence="1">
    <location>
        <position position="34"/>
    </location>
</feature>
<feature type="site" description="Transition state stabilizer" evidence="1">
    <location>
        <position position="133"/>
    </location>
</feature>
<accession>B1JB32</accession>
<proteinExistence type="inferred from homology"/>
<dbReference type="EC" id="4.6.1.12" evidence="1"/>
<dbReference type="EMBL" id="CP000949">
    <property type="protein sequence ID" value="ACA74537.1"/>
    <property type="molecule type" value="Genomic_DNA"/>
</dbReference>
<dbReference type="SMR" id="B1JB32"/>
<dbReference type="STRING" id="390235.PputW619_4057"/>
<dbReference type="KEGG" id="ppw:PputW619_4057"/>
<dbReference type="eggNOG" id="COG0245">
    <property type="taxonomic scope" value="Bacteria"/>
</dbReference>
<dbReference type="HOGENOM" id="CLU_084630_2_0_6"/>
<dbReference type="OrthoDB" id="9804336at2"/>
<dbReference type="UniPathway" id="UPA00056">
    <property type="reaction ID" value="UER00095"/>
</dbReference>
<dbReference type="GO" id="GO:0008685">
    <property type="term" value="F:2-C-methyl-D-erythritol 2,4-cyclodiphosphate synthase activity"/>
    <property type="evidence" value="ECO:0007669"/>
    <property type="project" value="UniProtKB-UniRule"/>
</dbReference>
<dbReference type="GO" id="GO:0046872">
    <property type="term" value="F:metal ion binding"/>
    <property type="evidence" value="ECO:0007669"/>
    <property type="project" value="UniProtKB-KW"/>
</dbReference>
<dbReference type="GO" id="GO:0019288">
    <property type="term" value="P:isopentenyl diphosphate biosynthetic process, methylerythritol 4-phosphate pathway"/>
    <property type="evidence" value="ECO:0007669"/>
    <property type="project" value="UniProtKB-UniRule"/>
</dbReference>
<dbReference type="GO" id="GO:0016114">
    <property type="term" value="P:terpenoid biosynthetic process"/>
    <property type="evidence" value="ECO:0007669"/>
    <property type="project" value="InterPro"/>
</dbReference>
<dbReference type="CDD" id="cd00554">
    <property type="entry name" value="MECDP_synthase"/>
    <property type="match status" value="1"/>
</dbReference>
<dbReference type="FunFam" id="3.30.1330.50:FF:000001">
    <property type="entry name" value="2-C-methyl-D-erythritol 2,4-cyclodiphosphate synthase"/>
    <property type="match status" value="1"/>
</dbReference>
<dbReference type="Gene3D" id="3.30.1330.50">
    <property type="entry name" value="2-C-methyl-D-erythritol 2,4-cyclodiphosphate synthase"/>
    <property type="match status" value="1"/>
</dbReference>
<dbReference type="HAMAP" id="MF_00107">
    <property type="entry name" value="IspF"/>
    <property type="match status" value="1"/>
</dbReference>
<dbReference type="InterPro" id="IPR003526">
    <property type="entry name" value="MECDP_synthase"/>
</dbReference>
<dbReference type="InterPro" id="IPR020555">
    <property type="entry name" value="MECDP_synthase_CS"/>
</dbReference>
<dbReference type="InterPro" id="IPR036571">
    <property type="entry name" value="MECDP_synthase_sf"/>
</dbReference>
<dbReference type="NCBIfam" id="TIGR00151">
    <property type="entry name" value="ispF"/>
    <property type="match status" value="1"/>
</dbReference>
<dbReference type="PANTHER" id="PTHR43181">
    <property type="entry name" value="2-C-METHYL-D-ERYTHRITOL 2,4-CYCLODIPHOSPHATE SYNTHASE, CHLOROPLASTIC"/>
    <property type="match status" value="1"/>
</dbReference>
<dbReference type="PANTHER" id="PTHR43181:SF1">
    <property type="entry name" value="2-C-METHYL-D-ERYTHRITOL 2,4-CYCLODIPHOSPHATE SYNTHASE, CHLOROPLASTIC"/>
    <property type="match status" value="1"/>
</dbReference>
<dbReference type="Pfam" id="PF02542">
    <property type="entry name" value="YgbB"/>
    <property type="match status" value="1"/>
</dbReference>
<dbReference type="SUPFAM" id="SSF69765">
    <property type="entry name" value="IpsF-like"/>
    <property type="match status" value="1"/>
</dbReference>
<dbReference type="PROSITE" id="PS01350">
    <property type="entry name" value="ISPF"/>
    <property type="match status" value="1"/>
</dbReference>
<gene>
    <name evidence="1" type="primary">ispF</name>
    <name type="ordered locus">PputW619_4057</name>
</gene>
<reference key="1">
    <citation type="submission" date="2008-02" db="EMBL/GenBank/DDBJ databases">
        <title>Complete sequence of Pseudomonas putida W619.</title>
        <authorList>
            <person name="Copeland A."/>
            <person name="Lucas S."/>
            <person name="Lapidus A."/>
            <person name="Barry K."/>
            <person name="Detter J.C."/>
            <person name="Glavina del Rio T."/>
            <person name="Dalin E."/>
            <person name="Tice H."/>
            <person name="Pitluck S."/>
            <person name="Chain P."/>
            <person name="Malfatti S."/>
            <person name="Shin M."/>
            <person name="Vergez L."/>
            <person name="Schmutz J."/>
            <person name="Larimer F."/>
            <person name="Land M."/>
            <person name="Hauser L."/>
            <person name="Kyrpides N."/>
            <person name="Kim E."/>
            <person name="Taghavi S."/>
            <person name="Vangronsveld D."/>
            <person name="van der Lelie D."/>
            <person name="Richardson P."/>
        </authorList>
    </citation>
    <scope>NUCLEOTIDE SEQUENCE [LARGE SCALE GENOMIC DNA]</scope>
    <source>
        <strain>W619</strain>
    </source>
</reference>
<sequence>MRIGHGYDVHRFCDGDFITLGGVRIPHKYGLLAHSDGDVLLHALSDALLGAAGLGDIGKHFPDTDPQFKGADSRVLLRHVVGIVQAKGWKVGNVDATIVAQAPKMSPHIETMRQRIAEDLQVELDQVNVKATTTEKLGFTGREEGIAVHAVALLLPA</sequence>
<protein>
    <recommendedName>
        <fullName evidence="1">2-C-methyl-D-erythritol 2,4-cyclodiphosphate synthase</fullName>
        <shortName evidence="1">MECDP-synthase</shortName>
        <shortName evidence="1">MECPP-synthase</shortName>
        <shortName evidence="1">MECPS</shortName>
        <ecNumber evidence="1">4.6.1.12</ecNumber>
    </recommendedName>
</protein>
<evidence type="ECO:0000255" key="1">
    <source>
        <dbReference type="HAMAP-Rule" id="MF_00107"/>
    </source>
</evidence>
<organism>
    <name type="scientific">Pseudomonas putida (strain W619)</name>
    <dbReference type="NCBI Taxonomy" id="390235"/>
    <lineage>
        <taxon>Bacteria</taxon>
        <taxon>Pseudomonadati</taxon>
        <taxon>Pseudomonadota</taxon>
        <taxon>Gammaproteobacteria</taxon>
        <taxon>Pseudomonadales</taxon>
        <taxon>Pseudomonadaceae</taxon>
        <taxon>Pseudomonas</taxon>
    </lineage>
</organism>
<name>ISPF_PSEPW</name>
<keyword id="KW-0414">Isoprene biosynthesis</keyword>
<keyword id="KW-0456">Lyase</keyword>
<keyword id="KW-0479">Metal-binding</keyword>